<evidence type="ECO:0000255" key="1">
    <source>
        <dbReference type="HAMAP-Rule" id="MF_00149"/>
    </source>
</evidence>
<name>MUTL_STRPS</name>
<comment type="function">
    <text evidence="1">This protein is involved in the repair of mismatches in DNA. It is required for dam-dependent methyl-directed DNA mismatch repair. May act as a 'molecular matchmaker', a protein that promotes the formation of a stable complex between two or more DNA-binding proteins in an ATP-dependent manner without itself being part of a final effector complex.</text>
</comment>
<comment type="similarity">
    <text evidence="1">Belongs to the DNA mismatch repair MutL/HexB family.</text>
</comment>
<sequence length="649" mass="73435">MSHIIELPEMLANQIAAGEVIERPASVVKELVENAIDAGSSQIIIEIEEAGLKKVQITDNGHGIAHDEVELALRRHATSKIKNQADLFRIRTLGFRGEALPSIASVSVLTLLTAVDGASHGTKLVARGGEVEEVIPATSPVGTKVCVEDLFFNTPARLKYMKSQQAELSHIIDIVNRLGLAHPEISFSLISDGKEMTRTAGTGQLRQAIAGIYGLVSAKKMIEIENSDLDFEISGFVSLPELTRANRNYISLFINGRYIKNFLLNRAILDGFGSKLMVGRFPLAVIHIHIDPYLADVNVHPTKQEVRISKEKELMTLVSEAIANSLKEQTLIPDALENLAKSTVRNREKVEQTILPLKENTLYYEKTEPSRPSQTEVADYQVELTDEGQDLTLFAKETLDRLTKPAKLHFAERKPANYDQLDHPELDLASIDKAYDKLEREEASSFPELEFFGQMHGTYLFAQGRDGLYIIDQHAAQERVKYEEYRESIGNVDQSQQQLLVPYIFEFPADDALRLKERMPLLEEVGVFLAEYGENQFILREHPIWMAEEEIESGIYEMCDMLLLTKEVSIKKYRAELAIMMSCKRSIKANHRIDDHSARQLLYQLSQCDNPYNCPHGRPVLVHFTKSDMEKMFRRIQENHTSLRELGKY</sequence>
<accession>B2IS10</accession>
<organism>
    <name type="scientific">Streptococcus pneumoniae (strain CGSP14)</name>
    <dbReference type="NCBI Taxonomy" id="516950"/>
    <lineage>
        <taxon>Bacteria</taxon>
        <taxon>Bacillati</taxon>
        <taxon>Bacillota</taxon>
        <taxon>Bacilli</taxon>
        <taxon>Lactobacillales</taxon>
        <taxon>Streptococcaceae</taxon>
        <taxon>Streptococcus</taxon>
    </lineage>
</organism>
<proteinExistence type="inferred from homology"/>
<protein>
    <recommendedName>
        <fullName evidence="1">DNA mismatch repair protein MutL</fullName>
    </recommendedName>
</protein>
<gene>
    <name evidence="1" type="primary">mutL</name>
    <name type="ordered locus">SPCG_0188</name>
</gene>
<reference key="1">
    <citation type="journal article" date="2009" name="BMC Genomics">
        <title>Genome evolution driven by host adaptations results in a more virulent and antimicrobial-resistant Streptococcus pneumoniae serotype 14.</title>
        <authorList>
            <person name="Ding F."/>
            <person name="Tang P."/>
            <person name="Hsu M.-H."/>
            <person name="Cui P."/>
            <person name="Hu S."/>
            <person name="Yu J."/>
            <person name="Chiu C.-H."/>
        </authorList>
    </citation>
    <scope>NUCLEOTIDE SEQUENCE [LARGE SCALE GENOMIC DNA]</scope>
    <source>
        <strain>CGSP14</strain>
    </source>
</reference>
<feature type="chain" id="PRO_1000096692" description="DNA mismatch repair protein MutL">
    <location>
        <begin position="1"/>
        <end position="649"/>
    </location>
</feature>
<dbReference type="EMBL" id="CP001033">
    <property type="protein sequence ID" value="ACB89440.1"/>
    <property type="molecule type" value="Genomic_DNA"/>
</dbReference>
<dbReference type="RefSeq" id="WP_000018169.1">
    <property type="nucleotide sequence ID" value="NC_010582.1"/>
</dbReference>
<dbReference type="SMR" id="B2IS10"/>
<dbReference type="KEGG" id="spw:SPCG_0188"/>
<dbReference type="HOGENOM" id="CLU_004131_4_1_9"/>
<dbReference type="GO" id="GO:0032300">
    <property type="term" value="C:mismatch repair complex"/>
    <property type="evidence" value="ECO:0007669"/>
    <property type="project" value="InterPro"/>
</dbReference>
<dbReference type="GO" id="GO:0005524">
    <property type="term" value="F:ATP binding"/>
    <property type="evidence" value="ECO:0007669"/>
    <property type="project" value="InterPro"/>
</dbReference>
<dbReference type="GO" id="GO:0016887">
    <property type="term" value="F:ATP hydrolysis activity"/>
    <property type="evidence" value="ECO:0007669"/>
    <property type="project" value="InterPro"/>
</dbReference>
<dbReference type="GO" id="GO:0140664">
    <property type="term" value="F:ATP-dependent DNA damage sensor activity"/>
    <property type="evidence" value="ECO:0007669"/>
    <property type="project" value="InterPro"/>
</dbReference>
<dbReference type="GO" id="GO:0030983">
    <property type="term" value="F:mismatched DNA binding"/>
    <property type="evidence" value="ECO:0007669"/>
    <property type="project" value="InterPro"/>
</dbReference>
<dbReference type="GO" id="GO:0006298">
    <property type="term" value="P:mismatch repair"/>
    <property type="evidence" value="ECO:0007669"/>
    <property type="project" value="UniProtKB-UniRule"/>
</dbReference>
<dbReference type="CDD" id="cd16926">
    <property type="entry name" value="HATPase_MutL-MLH-PMS-like"/>
    <property type="match status" value="1"/>
</dbReference>
<dbReference type="CDD" id="cd00782">
    <property type="entry name" value="MutL_Trans"/>
    <property type="match status" value="1"/>
</dbReference>
<dbReference type="FunFam" id="3.30.1370.100:FF:000004">
    <property type="entry name" value="DNA mismatch repair endonuclease MutL"/>
    <property type="match status" value="1"/>
</dbReference>
<dbReference type="FunFam" id="3.30.230.10:FF:000036">
    <property type="entry name" value="DNA mismatch repair endonuclease MutL"/>
    <property type="match status" value="1"/>
</dbReference>
<dbReference type="FunFam" id="3.30.565.10:FF:000003">
    <property type="entry name" value="DNA mismatch repair endonuclease MutL"/>
    <property type="match status" value="1"/>
</dbReference>
<dbReference type="Gene3D" id="3.30.230.10">
    <property type="match status" value="1"/>
</dbReference>
<dbReference type="Gene3D" id="3.30.565.10">
    <property type="entry name" value="Histidine kinase-like ATPase, C-terminal domain"/>
    <property type="match status" value="1"/>
</dbReference>
<dbReference type="Gene3D" id="3.30.1540.20">
    <property type="entry name" value="MutL, C-terminal domain, dimerisation subdomain"/>
    <property type="match status" value="1"/>
</dbReference>
<dbReference type="Gene3D" id="3.30.1370.100">
    <property type="entry name" value="MutL, C-terminal domain, regulatory subdomain"/>
    <property type="match status" value="1"/>
</dbReference>
<dbReference type="HAMAP" id="MF_00149">
    <property type="entry name" value="DNA_mis_repair"/>
    <property type="match status" value="1"/>
</dbReference>
<dbReference type="InterPro" id="IPR014762">
    <property type="entry name" value="DNA_mismatch_repair_CS"/>
</dbReference>
<dbReference type="InterPro" id="IPR020667">
    <property type="entry name" value="DNA_mismatch_repair_MutL"/>
</dbReference>
<dbReference type="InterPro" id="IPR013507">
    <property type="entry name" value="DNA_mismatch_S5_2-like"/>
</dbReference>
<dbReference type="InterPro" id="IPR036890">
    <property type="entry name" value="HATPase_C_sf"/>
</dbReference>
<dbReference type="InterPro" id="IPR002099">
    <property type="entry name" value="MutL/Mlh/PMS"/>
</dbReference>
<dbReference type="InterPro" id="IPR038973">
    <property type="entry name" value="MutL/Mlh/Pms-like"/>
</dbReference>
<dbReference type="InterPro" id="IPR014790">
    <property type="entry name" value="MutL_C"/>
</dbReference>
<dbReference type="InterPro" id="IPR042120">
    <property type="entry name" value="MutL_C_dimsub"/>
</dbReference>
<dbReference type="InterPro" id="IPR042121">
    <property type="entry name" value="MutL_C_regsub"/>
</dbReference>
<dbReference type="InterPro" id="IPR037198">
    <property type="entry name" value="MutL_C_sf"/>
</dbReference>
<dbReference type="InterPro" id="IPR020568">
    <property type="entry name" value="Ribosomal_Su5_D2-typ_SF"/>
</dbReference>
<dbReference type="InterPro" id="IPR014721">
    <property type="entry name" value="Ribsml_uS5_D2-typ_fold_subgr"/>
</dbReference>
<dbReference type="NCBIfam" id="TIGR00585">
    <property type="entry name" value="mutl"/>
    <property type="match status" value="1"/>
</dbReference>
<dbReference type="NCBIfam" id="NF000950">
    <property type="entry name" value="PRK00095.1-3"/>
    <property type="match status" value="1"/>
</dbReference>
<dbReference type="PANTHER" id="PTHR10073">
    <property type="entry name" value="DNA MISMATCH REPAIR PROTEIN MLH, PMS, MUTL"/>
    <property type="match status" value="1"/>
</dbReference>
<dbReference type="PANTHER" id="PTHR10073:SF12">
    <property type="entry name" value="DNA MISMATCH REPAIR PROTEIN MLH1"/>
    <property type="match status" value="1"/>
</dbReference>
<dbReference type="Pfam" id="PF01119">
    <property type="entry name" value="DNA_mis_repair"/>
    <property type="match status" value="1"/>
</dbReference>
<dbReference type="Pfam" id="PF13589">
    <property type="entry name" value="HATPase_c_3"/>
    <property type="match status" value="1"/>
</dbReference>
<dbReference type="Pfam" id="PF08676">
    <property type="entry name" value="MutL_C"/>
    <property type="match status" value="1"/>
</dbReference>
<dbReference type="SMART" id="SM01340">
    <property type="entry name" value="DNA_mis_repair"/>
    <property type="match status" value="1"/>
</dbReference>
<dbReference type="SMART" id="SM00853">
    <property type="entry name" value="MutL_C"/>
    <property type="match status" value="1"/>
</dbReference>
<dbReference type="SUPFAM" id="SSF55874">
    <property type="entry name" value="ATPase domain of HSP90 chaperone/DNA topoisomerase II/histidine kinase"/>
    <property type="match status" value="1"/>
</dbReference>
<dbReference type="SUPFAM" id="SSF118116">
    <property type="entry name" value="DNA mismatch repair protein MutL"/>
    <property type="match status" value="1"/>
</dbReference>
<dbReference type="SUPFAM" id="SSF54211">
    <property type="entry name" value="Ribosomal protein S5 domain 2-like"/>
    <property type="match status" value="1"/>
</dbReference>
<dbReference type="PROSITE" id="PS00058">
    <property type="entry name" value="DNA_MISMATCH_REPAIR_1"/>
    <property type="match status" value="1"/>
</dbReference>
<keyword id="KW-0227">DNA damage</keyword>
<keyword id="KW-0234">DNA repair</keyword>